<keyword id="KW-0665">Pyrimidine biosynthesis</keyword>
<keyword id="KW-0808">Transferase</keyword>
<accession>A4W0R0</accession>
<sequence length="307" mass="34594">MTITNGKVSLKHLVTMETLSNEEVLGLIQRGIAFKRGEKVELDRKYYASNLFFEDSTRTHKSFEMAELRLDMGMIDFDARTSSVNKGETLCDTILTMSALGVDICVIRHSEVDYYKQLIDSPTIQTSIVNGGDGSGQHPSQSLLDLMTIYEEFGTFDGLKIAIAGDITHSRVAKSNMQILKRLGAEIFFAGPEEWYAEEFDVYGQHLNIDDIVETVDVLMLLRVQHERHDGDGGFSKETYNRLHGLTEERYKRLKDTAIVMHPAPVNRDVEIDDSLVEAPKSRIVRQMQNGVFVRMAILEAIVNGKA</sequence>
<reference key="1">
    <citation type="journal article" date="2007" name="PLoS ONE">
        <title>A glimpse of streptococcal toxic shock syndrome from comparative genomics of S. suis 2 Chinese isolates.</title>
        <authorList>
            <person name="Chen C."/>
            <person name="Tang J."/>
            <person name="Dong W."/>
            <person name="Wang C."/>
            <person name="Feng Y."/>
            <person name="Wang J."/>
            <person name="Zheng F."/>
            <person name="Pan X."/>
            <person name="Liu D."/>
            <person name="Li M."/>
            <person name="Song Y."/>
            <person name="Zhu X."/>
            <person name="Sun H."/>
            <person name="Feng T."/>
            <person name="Guo Z."/>
            <person name="Ju A."/>
            <person name="Ge J."/>
            <person name="Dong Y."/>
            <person name="Sun W."/>
            <person name="Jiang Y."/>
            <person name="Wang J."/>
            <person name="Yan J."/>
            <person name="Yang H."/>
            <person name="Wang X."/>
            <person name="Gao G.F."/>
            <person name="Yang R."/>
            <person name="Wang J."/>
            <person name="Yu J."/>
        </authorList>
    </citation>
    <scope>NUCLEOTIDE SEQUENCE [LARGE SCALE GENOMIC DNA]</scope>
    <source>
        <strain>98HAH33</strain>
    </source>
</reference>
<dbReference type="EC" id="2.1.3.2" evidence="1"/>
<dbReference type="EMBL" id="CP000408">
    <property type="protein sequence ID" value="ABP91949.1"/>
    <property type="molecule type" value="Genomic_DNA"/>
</dbReference>
<dbReference type="SMR" id="A4W0R0"/>
<dbReference type="KEGG" id="ssv:SSU98_0791"/>
<dbReference type="HOGENOM" id="CLU_043846_2_1_9"/>
<dbReference type="UniPathway" id="UPA00070">
    <property type="reaction ID" value="UER00116"/>
</dbReference>
<dbReference type="GO" id="GO:0005829">
    <property type="term" value="C:cytosol"/>
    <property type="evidence" value="ECO:0007669"/>
    <property type="project" value="TreeGrafter"/>
</dbReference>
<dbReference type="GO" id="GO:0016597">
    <property type="term" value="F:amino acid binding"/>
    <property type="evidence" value="ECO:0007669"/>
    <property type="project" value="InterPro"/>
</dbReference>
<dbReference type="GO" id="GO:0004070">
    <property type="term" value="F:aspartate carbamoyltransferase activity"/>
    <property type="evidence" value="ECO:0007669"/>
    <property type="project" value="UniProtKB-UniRule"/>
</dbReference>
<dbReference type="GO" id="GO:0006207">
    <property type="term" value="P:'de novo' pyrimidine nucleobase biosynthetic process"/>
    <property type="evidence" value="ECO:0007669"/>
    <property type="project" value="InterPro"/>
</dbReference>
<dbReference type="GO" id="GO:0044205">
    <property type="term" value="P:'de novo' UMP biosynthetic process"/>
    <property type="evidence" value="ECO:0007669"/>
    <property type="project" value="UniProtKB-UniRule"/>
</dbReference>
<dbReference type="GO" id="GO:0006520">
    <property type="term" value="P:amino acid metabolic process"/>
    <property type="evidence" value="ECO:0007669"/>
    <property type="project" value="InterPro"/>
</dbReference>
<dbReference type="FunFam" id="3.40.50.1370:FF:000011">
    <property type="entry name" value="Aspartate carbamoyltransferase"/>
    <property type="match status" value="1"/>
</dbReference>
<dbReference type="Gene3D" id="3.40.50.1370">
    <property type="entry name" value="Aspartate/ornithine carbamoyltransferase"/>
    <property type="match status" value="2"/>
</dbReference>
<dbReference type="HAMAP" id="MF_00001">
    <property type="entry name" value="Asp_carb_tr"/>
    <property type="match status" value="1"/>
</dbReference>
<dbReference type="InterPro" id="IPR006132">
    <property type="entry name" value="Asp/Orn_carbamoyltranf_P-bd"/>
</dbReference>
<dbReference type="InterPro" id="IPR006130">
    <property type="entry name" value="Asp/Orn_carbamoylTrfase"/>
</dbReference>
<dbReference type="InterPro" id="IPR036901">
    <property type="entry name" value="Asp/Orn_carbamoylTrfase_sf"/>
</dbReference>
<dbReference type="InterPro" id="IPR002082">
    <property type="entry name" value="Asp_carbamoyltransf"/>
</dbReference>
<dbReference type="InterPro" id="IPR006131">
    <property type="entry name" value="Asp_carbamoyltransf_Asp/Orn-bd"/>
</dbReference>
<dbReference type="NCBIfam" id="TIGR00670">
    <property type="entry name" value="asp_carb_tr"/>
    <property type="match status" value="1"/>
</dbReference>
<dbReference type="NCBIfam" id="NF002032">
    <property type="entry name" value="PRK00856.1"/>
    <property type="match status" value="1"/>
</dbReference>
<dbReference type="PANTHER" id="PTHR45753:SF6">
    <property type="entry name" value="ASPARTATE CARBAMOYLTRANSFERASE"/>
    <property type="match status" value="1"/>
</dbReference>
<dbReference type="PANTHER" id="PTHR45753">
    <property type="entry name" value="ORNITHINE CARBAMOYLTRANSFERASE, MITOCHONDRIAL"/>
    <property type="match status" value="1"/>
</dbReference>
<dbReference type="Pfam" id="PF00185">
    <property type="entry name" value="OTCace"/>
    <property type="match status" value="1"/>
</dbReference>
<dbReference type="Pfam" id="PF02729">
    <property type="entry name" value="OTCace_N"/>
    <property type="match status" value="1"/>
</dbReference>
<dbReference type="PRINTS" id="PR00100">
    <property type="entry name" value="AOTCASE"/>
</dbReference>
<dbReference type="PRINTS" id="PR00101">
    <property type="entry name" value="ATCASE"/>
</dbReference>
<dbReference type="SUPFAM" id="SSF53671">
    <property type="entry name" value="Aspartate/ornithine carbamoyltransferase"/>
    <property type="match status" value="1"/>
</dbReference>
<dbReference type="PROSITE" id="PS00097">
    <property type="entry name" value="CARBAMOYLTRANSFERASE"/>
    <property type="match status" value="1"/>
</dbReference>
<feature type="chain" id="PRO_0000301630" description="Aspartate carbamoyltransferase catalytic subunit">
    <location>
        <begin position="1"/>
        <end position="307"/>
    </location>
</feature>
<feature type="binding site" evidence="1">
    <location>
        <position position="58"/>
    </location>
    <ligand>
        <name>carbamoyl phosphate</name>
        <dbReference type="ChEBI" id="CHEBI:58228"/>
    </ligand>
</feature>
<feature type="binding site" evidence="1">
    <location>
        <position position="59"/>
    </location>
    <ligand>
        <name>carbamoyl phosphate</name>
        <dbReference type="ChEBI" id="CHEBI:58228"/>
    </ligand>
</feature>
<feature type="binding site" evidence="1">
    <location>
        <position position="86"/>
    </location>
    <ligand>
        <name>L-aspartate</name>
        <dbReference type="ChEBI" id="CHEBI:29991"/>
    </ligand>
</feature>
<feature type="binding site" evidence="1">
    <location>
        <position position="108"/>
    </location>
    <ligand>
        <name>carbamoyl phosphate</name>
        <dbReference type="ChEBI" id="CHEBI:58228"/>
    </ligand>
</feature>
<feature type="binding site" evidence="1">
    <location>
        <position position="138"/>
    </location>
    <ligand>
        <name>carbamoyl phosphate</name>
        <dbReference type="ChEBI" id="CHEBI:58228"/>
    </ligand>
</feature>
<feature type="binding site" evidence="1">
    <location>
        <position position="141"/>
    </location>
    <ligand>
        <name>carbamoyl phosphate</name>
        <dbReference type="ChEBI" id="CHEBI:58228"/>
    </ligand>
</feature>
<feature type="binding site" evidence="1">
    <location>
        <position position="171"/>
    </location>
    <ligand>
        <name>L-aspartate</name>
        <dbReference type="ChEBI" id="CHEBI:29991"/>
    </ligand>
</feature>
<feature type="binding site" evidence="1">
    <location>
        <position position="223"/>
    </location>
    <ligand>
        <name>L-aspartate</name>
        <dbReference type="ChEBI" id="CHEBI:29991"/>
    </ligand>
</feature>
<feature type="binding site" evidence="1">
    <location>
        <position position="264"/>
    </location>
    <ligand>
        <name>carbamoyl phosphate</name>
        <dbReference type="ChEBI" id="CHEBI:58228"/>
    </ligand>
</feature>
<feature type="binding site" evidence="1">
    <location>
        <position position="265"/>
    </location>
    <ligand>
        <name>carbamoyl phosphate</name>
        <dbReference type="ChEBI" id="CHEBI:58228"/>
    </ligand>
</feature>
<comment type="function">
    <text evidence="1">Catalyzes the condensation of carbamoyl phosphate and aspartate to form carbamoyl aspartate and inorganic phosphate, the committed step in the de novo pyrimidine nucleotide biosynthesis pathway.</text>
</comment>
<comment type="catalytic activity">
    <reaction evidence="1">
        <text>carbamoyl phosphate + L-aspartate = N-carbamoyl-L-aspartate + phosphate + H(+)</text>
        <dbReference type="Rhea" id="RHEA:20013"/>
        <dbReference type="ChEBI" id="CHEBI:15378"/>
        <dbReference type="ChEBI" id="CHEBI:29991"/>
        <dbReference type="ChEBI" id="CHEBI:32814"/>
        <dbReference type="ChEBI" id="CHEBI:43474"/>
        <dbReference type="ChEBI" id="CHEBI:58228"/>
        <dbReference type="EC" id="2.1.3.2"/>
    </reaction>
</comment>
<comment type="pathway">
    <text evidence="1">Pyrimidine metabolism; UMP biosynthesis via de novo pathway; (S)-dihydroorotate from bicarbonate: step 2/3.</text>
</comment>
<comment type="subunit">
    <text evidence="1">Heterododecamer (2C3:3R2) of six catalytic PyrB chains organized as two trimers (C3), and six regulatory PyrI chains organized as three dimers (R2).</text>
</comment>
<comment type="similarity">
    <text evidence="1">Belongs to the aspartate/ornithine carbamoyltransferase superfamily. ATCase family.</text>
</comment>
<organism>
    <name type="scientific">Streptococcus suis (strain 98HAH33)</name>
    <dbReference type="NCBI Taxonomy" id="391296"/>
    <lineage>
        <taxon>Bacteria</taxon>
        <taxon>Bacillati</taxon>
        <taxon>Bacillota</taxon>
        <taxon>Bacilli</taxon>
        <taxon>Lactobacillales</taxon>
        <taxon>Streptococcaceae</taxon>
        <taxon>Streptococcus</taxon>
    </lineage>
</organism>
<gene>
    <name evidence="1" type="primary">pyrB</name>
    <name type="ordered locus">SSU98_0791</name>
</gene>
<name>PYRB_STRS2</name>
<protein>
    <recommendedName>
        <fullName evidence="1">Aspartate carbamoyltransferase catalytic subunit</fullName>
        <ecNumber evidence="1">2.1.3.2</ecNumber>
    </recommendedName>
    <alternativeName>
        <fullName evidence="1">Aspartate transcarbamylase</fullName>
        <shortName evidence="1">ATCase</shortName>
    </alternativeName>
</protein>
<proteinExistence type="inferred from homology"/>
<evidence type="ECO:0000255" key="1">
    <source>
        <dbReference type="HAMAP-Rule" id="MF_00001"/>
    </source>
</evidence>